<sequence length="215" mass="24077">MSPKTRLDSDFFGPGDRWQTVAGVDEVGRGCLFGPVVTAAVILPETAIAPLQQAGVTDSKRLSQRQRQQLYPLICEVALATGWGLASVAEIERWNILQATFLAMRRAIAKLDRPISRCLIDGNQQVPQLTYPQTTVIQGDRHCITIAAASILAKVWRDRLIERLDERYPGYALGRHKGYGTAQHRQAILQLGPTPLHRIRFLRSLRQPSQQIDLF</sequence>
<keyword id="KW-0963">Cytoplasm</keyword>
<keyword id="KW-0255">Endonuclease</keyword>
<keyword id="KW-0378">Hydrolase</keyword>
<keyword id="KW-0464">Manganese</keyword>
<keyword id="KW-0479">Metal-binding</keyword>
<keyword id="KW-0540">Nuclease</keyword>
<evidence type="ECO:0000255" key="1">
    <source>
        <dbReference type="HAMAP-Rule" id="MF_00052"/>
    </source>
</evidence>
<evidence type="ECO:0000255" key="2">
    <source>
        <dbReference type="PROSITE-ProRule" id="PRU01319"/>
    </source>
</evidence>
<organism>
    <name type="scientific">Synechococcus sp. (strain ATCC 27144 / PCC 6301 / SAUG 1402/1)</name>
    <name type="common">Anacystis nidulans</name>
    <dbReference type="NCBI Taxonomy" id="269084"/>
    <lineage>
        <taxon>Bacteria</taxon>
        <taxon>Bacillati</taxon>
        <taxon>Cyanobacteriota</taxon>
        <taxon>Cyanophyceae</taxon>
        <taxon>Synechococcales</taxon>
        <taxon>Synechococcaceae</taxon>
        <taxon>Synechococcus</taxon>
    </lineage>
</organism>
<dbReference type="EC" id="3.1.26.4" evidence="1"/>
<dbReference type="EMBL" id="AP008231">
    <property type="protein sequence ID" value="BAD78851.1"/>
    <property type="molecule type" value="Genomic_DNA"/>
</dbReference>
<dbReference type="RefSeq" id="WP_011242973.1">
    <property type="nucleotide sequence ID" value="NZ_CP085785.1"/>
</dbReference>
<dbReference type="SMR" id="Q5N4B8"/>
<dbReference type="KEGG" id="syc:syc0661_c"/>
<dbReference type="eggNOG" id="COG0164">
    <property type="taxonomic scope" value="Bacteria"/>
</dbReference>
<dbReference type="Proteomes" id="UP000001175">
    <property type="component" value="Chromosome"/>
</dbReference>
<dbReference type="GO" id="GO:0005737">
    <property type="term" value="C:cytoplasm"/>
    <property type="evidence" value="ECO:0007669"/>
    <property type="project" value="UniProtKB-SubCell"/>
</dbReference>
<dbReference type="GO" id="GO:0032299">
    <property type="term" value="C:ribonuclease H2 complex"/>
    <property type="evidence" value="ECO:0007669"/>
    <property type="project" value="TreeGrafter"/>
</dbReference>
<dbReference type="GO" id="GO:0030145">
    <property type="term" value="F:manganese ion binding"/>
    <property type="evidence" value="ECO:0007669"/>
    <property type="project" value="UniProtKB-UniRule"/>
</dbReference>
<dbReference type="GO" id="GO:0003723">
    <property type="term" value="F:RNA binding"/>
    <property type="evidence" value="ECO:0007669"/>
    <property type="project" value="InterPro"/>
</dbReference>
<dbReference type="GO" id="GO:0004523">
    <property type="term" value="F:RNA-DNA hybrid ribonuclease activity"/>
    <property type="evidence" value="ECO:0007669"/>
    <property type="project" value="UniProtKB-UniRule"/>
</dbReference>
<dbReference type="GO" id="GO:0043137">
    <property type="term" value="P:DNA replication, removal of RNA primer"/>
    <property type="evidence" value="ECO:0007669"/>
    <property type="project" value="TreeGrafter"/>
</dbReference>
<dbReference type="GO" id="GO:0006298">
    <property type="term" value="P:mismatch repair"/>
    <property type="evidence" value="ECO:0007669"/>
    <property type="project" value="TreeGrafter"/>
</dbReference>
<dbReference type="CDD" id="cd07182">
    <property type="entry name" value="RNase_HII_bacteria_HII_like"/>
    <property type="match status" value="1"/>
</dbReference>
<dbReference type="Gene3D" id="3.30.420.10">
    <property type="entry name" value="Ribonuclease H-like superfamily/Ribonuclease H"/>
    <property type="match status" value="1"/>
</dbReference>
<dbReference type="HAMAP" id="MF_00052_B">
    <property type="entry name" value="RNase_HII_B"/>
    <property type="match status" value="1"/>
</dbReference>
<dbReference type="InterPro" id="IPR022898">
    <property type="entry name" value="RNase_HII"/>
</dbReference>
<dbReference type="InterPro" id="IPR001352">
    <property type="entry name" value="RNase_HII/HIII"/>
</dbReference>
<dbReference type="InterPro" id="IPR024567">
    <property type="entry name" value="RNase_HII/HIII_dom"/>
</dbReference>
<dbReference type="InterPro" id="IPR012337">
    <property type="entry name" value="RNaseH-like_sf"/>
</dbReference>
<dbReference type="InterPro" id="IPR036397">
    <property type="entry name" value="RNaseH_sf"/>
</dbReference>
<dbReference type="NCBIfam" id="NF000595">
    <property type="entry name" value="PRK00015.1-3"/>
    <property type="match status" value="1"/>
</dbReference>
<dbReference type="NCBIfam" id="NF010537">
    <property type="entry name" value="PRK13925.1"/>
    <property type="match status" value="1"/>
</dbReference>
<dbReference type="PANTHER" id="PTHR10954">
    <property type="entry name" value="RIBONUCLEASE H2 SUBUNIT A"/>
    <property type="match status" value="1"/>
</dbReference>
<dbReference type="PANTHER" id="PTHR10954:SF18">
    <property type="entry name" value="RIBONUCLEASE HII"/>
    <property type="match status" value="1"/>
</dbReference>
<dbReference type="Pfam" id="PF01351">
    <property type="entry name" value="RNase_HII"/>
    <property type="match status" value="1"/>
</dbReference>
<dbReference type="SUPFAM" id="SSF53098">
    <property type="entry name" value="Ribonuclease H-like"/>
    <property type="match status" value="1"/>
</dbReference>
<dbReference type="PROSITE" id="PS51975">
    <property type="entry name" value="RNASE_H_2"/>
    <property type="match status" value="1"/>
</dbReference>
<proteinExistence type="inferred from homology"/>
<comment type="function">
    <text evidence="1">Endonuclease that specifically degrades the RNA of RNA-DNA hybrids.</text>
</comment>
<comment type="catalytic activity">
    <reaction evidence="1">
        <text>Endonucleolytic cleavage to 5'-phosphomonoester.</text>
        <dbReference type="EC" id="3.1.26.4"/>
    </reaction>
</comment>
<comment type="cofactor">
    <cofactor evidence="1">
        <name>Mn(2+)</name>
        <dbReference type="ChEBI" id="CHEBI:29035"/>
    </cofactor>
    <cofactor evidence="1">
        <name>Mg(2+)</name>
        <dbReference type="ChEBI" id="CHEBI:18420"/>
    </cofactor>
    <text evidence="1">Manganese or magnesium. Binds 1 divalent metal ion per monomer in the absence of substrate. May bind a second metal ion after substrate binding.</text>
</comment>
<comment type="subcellular location">
    <subcellularLocation>
        <location evidence="1">Cytoplasm</location>
    </subcellularLocation>
</comment>
<comment type="similarity">
    <text evidence="1">Belongs to the RNase HII family.</text>
</comment>
<reference key="1">
    <citation type="journal article" date="2007" name="Photosyn. Res.">
        <title>Complete nucleotide sequence of the freshwater unicellular cyanobacterium Synechococcus elongatus PCC 6301 chromosome: gene content and organization.</title>
        <authorList>
            <person name="Sugita C."/>
            <person name="Ogata K."/>
            <person name="Shikata M."/>
            <person name="Jikuya H."/>
            <person name="Takano J."/>
            <person name="Furumichi M."/>
            <person name="Kanehisa M."/>
            <person name="Omata T."/>
            <person name="Sugiura M."/>
            <person name="Sugita M."/>
        </authorList>
    </citation>
    <scope>NUCLEOTIDE SEQUENCE [LARGE SCALE GENOMIC DNA]</scope>
    <source>
        <strain>ATCC 27144 / PCC 6301 / SAUG 1402/1</strain>
    </source>
</reference>
<feature type="chain" id="PRO_0000235782" description="Ribonuclease HII">
    <location>
        <begin position="1"/>
        <end position="215"/>
    </location>
</feature>
<feature type="domain" description="RNase H type-2" evidence="2">
    <location>
        <begin position="19"/>
        <end position="213"/>
    </location>
</feature>
<feature type="binding site" evidence="1">
    <location>
        <position position="25"/>
    </location>
    <ligand>
        <name>a divalent metal cation</name>
        <dbReference type="ChEBI" id="CHEBI:60240"/>
    </ligand>
</feature>
<feature type="binding site" evidence="1">
    <location>
        <position position="26"/>
    </location>
    <ligand>
        <name>a divalent metal cation</name>
        <dbReference type="ChEBI" id="CHEBI:60240"/>
    </ligand>
</feature>
<feature type="binding site" evidence="1">
    <location>
        <position position="121"/>
    </location>
    <ligand>
        <name>a divalent metal cation</name>
        <dbReference type="ChEBI" id="CHEBI:60240"/>
    </ligand>
</feature>
<accession>Q5N4B8</accession>
<gene>
    <name evidence="1" type="primary">rnhB</name>
    <name type="ordered locus">syc0661_c</name>
</gene>
<protein>
    <recommendedName>
        <fullName evidence="1">Ribonuclease HII</fullName>
        <shortName evidence="1">RNase HII</shortName>
        <ecNumber evidence="1">3.1.26.4</ecNumber>
    </recommendedName>
</protein>
<name>RNH2_SYNP6</name>